<proteinExistence type="inferred from homology"/>
<reference key="1">
    <citation type="journal article" date="2002" name="Lancet">
        <title>Genome and virulence determinants of high virulence community-acquired MRSA.</title>
        <authorList>
            <person name="Baba T."/>
            <person name="Takeuchi F."/>
            <person name="Kuroda M."/>
            <person name="Yuzawa H."/>
            <person name="Aoki K."/>
            <person name="Oguchi A."/>
            <person name="Nagai Y."/>
            <person name="Iwama N."/>
            <person name="Asano K."/>
            <person name="Naimi T."/>
            <person name="Kuroda H."/>
            <person name="Cui L."/>
            <person name="Yamamoto K."/>
            <person name="Hiramatsu K."/>
        </authorList>
    </citation>
    <scope>NUCLEOTIDE SEQUENCE [LARGE SCALE GENOMIC DNA]</scope>
    <source>
        <strain>MW2</strain>
    </source>
</reference>
<evidence type="ECO:0000250" key="1"/>
<evidence type="ECO:0000305" key="2"/>
<sequence>MTKEYATLAGGCFWCMVKPFTSYPGIKSVVSGYSGGHVDNPTYEQVCTNQTGHVEAVQITFDPEVTSFENILDIYFKTFDPTDDQGQFFDRGESYQPVIFYHDEHQKKAAEFKKQQLNEQGIFKKPVITPIKPYKNFYPAEDYHQDYYKKNPVHYYQYQRGSGRKAFIESHWGNQNA</sequence>
<name>MSRA2_STAAW</name>
<accession>P0A085</accession>
<accession>Q93P63</accession>
<keyword id="KW-0560">Oxidoreductase</keyword>
<feature type="chain" id="PRO_0000138592" description="Peptide methionine sulfoxide reductase MsrA 2">
    <location>
        <begin position="1"/>
        <end position="177"/>
    </location>
</feature>
<feature type="active site" evidence="1">
    <location>
        <position position="12"/>
    </location>
</feature>
<dbReference type="EC" id="1.8.4.11"/>
<dbReference type="EMBL" id="BA000033">
    <property type="protein sequence ID" value="BAB95179.1"/>
    <property type="molecule type" value="Genomic_DNA"/>
</dbReference>
<dbReference type="RefSeq" id="WP_000159902.1">
    <property type="nucleotide sequence ID" value="NC_003923.1"/>
</dbReference>
<dbReference type="SMR" id="P0A085"/>
<dbReference type="KEGG" id="sam:MW1314"/>
<dbReference type="HOGENOM" id="CLU_031040_10_1_9"/>
<dbReference type="GO" id="GO:0033744">
    <property type="term" value="F:L-methionine:thioredoxin-disulfide S-oxidoreductase activity"/>
    <property type="evidence" value="ECO:0007669"/>
    <property type="project" value="RHEA"/>
</dbReference>
<dbReference type="GO" id="GO:0008113">
    <property type="term" value="F:peptide-methionine (S)-S-oxide reductase activity"/>
    <property type="evidence" value="ECO:0007669"/>
    <property type="project" value="UniProtKB-UniRule"/>
</dbReference>
<dbReference type="GO" id="GO:0036211">
    <property type="term" value="P:protein modification process"/>
    <property type="evidence" value="ECO:0007669"/>
    <property type="project" value="UniProtKB-UniRule"/>
</dbReference>
<dbReference type="FunFam" id="3.30.1060.10:FF:000003">
    <property type="entry name" value="Peptide methionine sulfoxide reductase MsrA"/>
    <property type="match status" value="1"/>
</dbReference>
<dbReference type="Gene3D" id="3.30.1060.10">
    <property type="entry name" value="Peptide methionine sulphoxide reductase MsrA"/>
    <property type="match status" value="1"/>
</dbReference>
<dbReference type="HAMAP" id="MF_01401">
    <property type="entry name" value="MsrA"/>
    <property type="match status" value="1"/>
</dbReference>
<dbReference type="InterPro" id="IPR002569">
    <property type="entry name" value="Met_Sox_Rdtase_MsrA_dom"/>
</dbReference>
<dbReference type="InterPro" id="IPR036509">
    <property type="entry name" value="Met_Sox_Rdtase_MsrA_sf"/>
</dbReference>
<dbReference type="NCBIfam" id="TIGR00401">
    <property type="entry name" value="msrA"/>
    <property type="match status" value="1"/>
</dbReference>
<dbReference type="PANTHER" id="PTHR43774">
    <property type="entry name" value="PEPTIDE METHIONINE SULFOXIDE REDUCTASE"/>
    <property type="match status" value="1"/>
</dbReference>
<dbReference type="PANTHER" id="PTHR43774:SF1">
    <property type="entry name" value="PEPTIDE METHIONINE SULFOXIDE REDUCTASE MSRA 2"/>
    <property type="match status" value="1"/>
</dbReference>
<dbReference type="Pfam" id="PF01625">
    <property type="entry name" value="PMSR"/>
    <property type="match status" value="1"/>
</dbReference>
<dbReference type="SUPFAM" id="SSF55068">
    <property type="entry name" value="Peptide methionine sulfoxide reductase"/>
    <property type="match status" value="1"/>
</dbReference>
<organism>
    <name type="scientific">Staphylococcus aureus (strain MW2)</name>
    <dbReference type="NCBI Taxonomy" id="196620"/>
    <lineage>
        <taxon>Bacteria</taxon>
        <taxon>Bacillati</taxon>
        <taxon>Bacillota</taxon>
        <taxon>Bacilli</taxon>
        <taxon>Bacillales</taxon>
        <taxon>Staphylococcaceae</taxon>
        <taxon>Staphylococcus</taxon>
    </lineage>
</organism>
<comment type="function">
    <text evidence="1">Has an important function as a repair enzyme for proteins that have been inactivated by oxidation. Catalyzes the reversible oxidation-reduction of methionine sulfoxide in proteins to methionine (By similarity).</text>
</comment>
<comment type="catalytic activity">
    <reaction>
        <text>L-methionyl-[protein] + [thioredoxin]-disulfide + H2O = L-methionyl-(S)-S-oxide-[protein] + [thioredoxin]-dithiol</text>
        <dbReference type="Rhea" id="RHEA:14217"/>
        <dbReference type="Rhea" id="RHEA-COMP:10698"/>
        <dbReference type="Rhea" id="RHEA-COMP:10700"/>
        <dbReference type="Rhea" id="RHEA-COMP:12313"/>
        <dbReference type="Rhea" id="RHEA-COMP:12315"/>
        <dbReference type="ChEBI" id="CHEBI:15377"/>
        <dbReference type="ChEBI" id="CHEBI:16044"/>
        <dbReference type="ChEBI" id="CHEBI:29950"/>
        <dbReference type="ChEBI" id="CHEBI:44120"/>
        <dbReference type="ChEBI" id="CHEBI:50058"/>
        <dbReference type="EC" id="1.8.4.11"/>
    </reaction>
</comment>
<comment type="catalytic activity">
    <reaction>
        <text>[thioredoxin]-disulfide + L-methionine + H2O = L-methionine (S)-S-oxide + [thioredoxin]-dithiol</text>
        <dbReference type="Rhea" id="RHEA:19993"/>
        <dbReference type="Rhea" id="RHEA-COMP:10698"/>
        <dbReference type="Rhea" id="RHEA-COMP:10700"/>
        <dbReference type="ChEBI" id="CHEBI:15377"/>
        <dbReference type="ChEBI" id="CHEBI:29950"/>
        <dbReference type="ChEBI" id="CHEBI:50058"/>
        <dbReference type="ChEBI" id="CHEBI:57844"/>
        <dbReference type="ChEBI" id="CHEBI:58772"/>
        <dbReference type="EC" id="1.8.4.11"/>
    </reaction>
</comment>
<comment type="similarity">
    <text evidence="2">Belongs to the MsrA Met sulfoxide reductase family.</text>
</comment>
<gene>
    <name type="primary">msrA2</name>
    <name type="synonym">msrA</name>
    <name type="ordered locus">MW1314</name>
</gene>
<protein>
    <recommendedName>
        <fullName>Peptide methionine sulfoxide reductase MsrA 2</fullName>
        <shortName>Protein-methionine-S-oxide reductase 2</shortName>
        <ecNumber>1.8.4.11</ecNumber>
    </recommendedName>
    <alternativeName>
        <fullName>Peptide-methionine (S)-S-oxide reductase 2</fullName>
        <shortName>Peptide Met(O) reductase 2</shortName>
    </alternativeName>
</protein>